<sequence>MEHARDLTLLPKAHLHLHFTGSMRPSTLLELADKYGVRLPDALTAGEPPKLRATDERGWFRFQRLYDAARSCLREPDDIRRLVREAAEEDVRDGSGWLEIQVDPTSYAPLLGGMIPAVEIILDAVDAASRETGLGMRVLIAANRMKHPLDARTLARLAVRYADRGIVGFGLSNDERRGMARDFDRAFAIAREGGLLAAPHGGELTGPSSVRDCLDDLHASRIGHGVRAAEDPRLLKRLADRQITCEVCPASNVALGVYERPEDVPLRTLFEAGVPMALGADDPLLFGSRLAAQYEIARRHHAFTDTELAELARQSVRGSAAPDDVQAKLLAGIDHWLTG</sequence>
<keyword id="KW-0378">Hydrolase</keyword>
<keyword id="KW-0479">Metal-binding</keyword>
<keyword id="KW-0546">Nucleotide metabolism</keyword>
<keyword id="KW-0862">Zinc</keyword>
<accession>P53984</accession>
<evidence type="ECO:0000250" key="1"/>
<evidence type="ECO:0000255" key="2">
    <source>
        <dbReference type="PROSITE-ProRule" id="PRU10104"/>
    </source>
</evidence>
<evidence type="ECO:0000305" key="3"/>
<dbReference type="EC" id="3.5.4.-"/>
<dbReference type="EMBL" id="D50624">
    <property type="protein sequence ID" value="BAA09298.1"/>
    <property type="molecule type" value="Genomic_DNA"/>
</dbReference>
<dbReference type="PIR" id="T11785">
    <property type="entry name" value="T11785"/>
</dbReference>
<dbReference type="RefSeq" id="WP_033225040.1">
    <property type="nucleotide sequence ID" value="NZ_JNYC01000038.1"/>
</dbReference>
<dbReference type="SMR" id="P53984"/>
<dbReference type="eggNOG" id="COG1816">
    <property type="taxonomic scope" value="Bacteria"/>
</dbReference>
<dbReference type="GO" id="GO:0019239">
    <property type="term" value="F:deaminase activity"/>
    <property type="evidence" value="ECO:0007669"/>
    <property type="project" value="InterPro"/>
</dbReference>
<dbReference type="GO" id="GO:0016814">
    <property type="term" value="F:hydrolase activity, acting on carbon-nitrogen (but not peptide) bonds, in cyclic amidines"/>
    <property type="evidence" value="ECO:0007669"/>
    <property type="project" value="UniProtKB-ARBA"/>
</dbReference>
<dbReference type="GO" id="GO:0046872">
    <property type="term" value="F:metal ion binding"/>
    <property type="evidence" value="ECO:0007669"/>
    <property type="project" value="UniProtKB-KW"/>
</dbReference>
<dbReference type="GO" id="GO:0009117">
    <property type="term" value="P:nucleotide metabolic process"/>
    <property type="evidence" value="ECO:0007669"/>
    <property type="project" value="UniProtKB-KW"/>
</dbReference>
<dbReference type="GO" id="GO:0009168">
    <property type="term" value="P:purine ribonucleoside monophosphate biosynthetic process"/>
    <property type="evidence" value="ECO:0007669"/>
    <property type="project" value="InterPro"/>
</dbReference>
<dbReference type="CDD" id="cd01320">
    <property type="entry name" value="ADA"/>
    <property type="match status" value="1"/>
</dbReference>
<dbReference type="Gene3D" id="3.20.20.140">
    <property type="entry name" value="Metal-dependent hydrolases"/>
    <property type="match status" value="1"/>
</dbReference>
<dbReference type="InterPro" id="IPR006650">
    <property type="entry name" value="A/AMP_deam_AS"/>
</dbReference>
<dbReference type="InterPro" id="IPR001365">
    <property type="entry name" value="A_deaminase_dom"/>
</dbReference>
<dbReference type="InterPro" id="IPR006330">
    <property type="entry name" value="Ado/ade_deaminase"/>
</dbReference>
<dbReference type="InterPro" id="IPR032466">
    <property type="entry name" value="Metal_Hydrolase"/>
</dbReference>
<dbReference type="NCBIfam" id="TIGR01430">
    <property type="entry name" value="aden_deam"/>
    <property type="match status" value="1"/>
</dbReference>
<dbReference type="NCBIfam" id="NF006849">
    <property type="entry name" value="PRK09358.1-5"/>
    <property type="match status" value="1"/>
</dbReference>
<dbReference type="PANTHER" id="PTHR43114">
    <property type="entry name" value="ADENINE DEAMINASE"/>
    <property type="match status" value="1"/>
</dbReference>
<dbReference type="PANTHER" id="PTHR43114:SF6">
    <property type="entry name" value="ADENINE DEAMINASE"/>
    <property type="match status" value="1"/>
</dbReference>
<dbReference type="Pfam" id="PF00962">
    <property type="entry name" value="A_deaminase"/>
    <property type="match status" value="1"/>
</dbReference>
<dbReference type="SUPFAM" id="SSF51556">
    <property type="entry name" value="Metallo-dependent hydrolases"/>
    <property type="match status" value="1"/>
</dbReference>
<dbReference type="PROSITE" id="PS00485">
    <property type="entry name" value="A_DEAMINASE"/>
    <property type="match status" value="1"/>
</dbReference>
<name>ADDL_STRVG</name>
<comment type="function">
    <text evidence="1">Putative nucleoside deaminase. May catalyze the hydrolytic deamination of adenosine or some similar substrate and play a role in purine metabolism (By similarity).</text>
</comment>
<comment type="cofactor">
    <cofactor evidence="1">
        <name>Zn(2+)</name>
        <dbReference type="ChEBI" id="CHEBI:29105"/>
    </cofactor>
    <text evidence="1">Binds 1 zinc ion per subunit.</text>
</comment>
<comment type="similarity">
    <text evidence="3">Belongs to the metallo-dependent hydrolases superfamily. Adenosine and AMP deaminases family.</text>
</comment>
<protein>
    <recommendedName>
        <fullName>Putative adenosine/adenine deaminase</fullName>
        <ecNumber>3.5.4.-</ecNumber>
    </recommendedName>
    <alternativeName>
        <fullName>Adenosine aminohydrolase</fullName>
    </alternativeName>
</protein>
<feature type="chain" id="PRO_0000194395" description="Putative adenosine/adenine deaminase">
    <location>
        <begin position="1"/>
        <end position="339"/>
    </location>
</feature>
<feature type="active site" description="Proton donor" evidence="2">
    <location>
        <position position="203"/>
    </location>
</feature>
<feature type="binding site" evidence="1">
    <location>
        <position position="16"/>
    </location>
    <ligand>
        <name>Zn(2+)</name>
        <dbReference type="ChEBI" id="CHEBI:29105"/>
        <note>catalytic</note>
    </ligand>
</feature>
<feature type="binding site" evidence="1">
    <location>
        <position position="18"/>
    </location>
    <ligand>
        <name>substrate</name>
    </ligand>
</feature>
<feature type="binding site" evidence="1">
    <location>
        <position position="18"/>
    </location>
    <ligand>
        <name>Zn(2+)</name>
        <dbReference type="ChEBI" id="CHEBI:29105"/>
        <note>catalytic</note>
    </ligand>
</feature>
<feature type="binding site" evidence="1">
    <location>
        <position position="200"/>
    </location>
    <ligand>
        <name>Zn(2+)</name>
        <dbReference type="ChEBI" id="CHEBI:29105"/>
        <note>catalytic</note>
    </ligand>
</feature>
<feature type="binding site" evidence="1">
    <location>
        <position position="281"/>
    </location>
    <ligand>
        <name>Zn(2+)</name>
        <dbReference type="ChEBI" id="CHEBI:29105"/>
        <note>catalytic</note>
    </ligand>
</feature>
<feature type="binding site" evidence="1">
    <location>
        <position position="282"/>
    </location>
    <ligand>
        <name>substrate</name>
    </ligand>
</feature>
<feature type="site" description="Important for catalytic activity" evidence="1">
    <location>
        <position position="224"/>
    </location>
</feature>
<proteinExistence type="inferred from homology"/>
<reference key="1">
    <citation type="journal article" date="1996" name="Gene">
        <title>Gene organization in the ada-rplL region of Streptomyces virginiae.</title>
        <authorList>
            <person name="Katayama M."/>
            <person name="Sakai Y."/>
            <person name="Okamoto S."/>
            <person name="Ihara F."/>
            <person name="Nihira T."/>
            <person name="Yamada Y."/>
        </authorList>
    </citation>
    <scope>NUCLEOTIDE SEQUENCE [GENOMIC DNA]</scope>
</reference>
<organism>
    <name type="scientific">Streptomyces virginiae</name>
    <name type="common">Streptomyces cinnamonensis</name>
    <dbReference type="NCBI Taxonomy" id="1961"/>
    <lineage>
        <taxon>Bacteria</taxon>
        <taxon>Bacillati</taxon>
        <taxon>Actinomycetota</taxon>
        <taxon>Actinomycetes</taxon>
        <taxon>Kitasatosporales</taxon>
        <taxon>Streptomycetaceae</taxon>
        <taxon>Streptomyces</taxon>
    </lineage>
</organism>